<sequence>MKTFSAKPHEVQRDWFVVDGTDKVLGRLAAEVARRLRGKHKAIYTPHVDTGDYIVVVNVDKLRVTGNKALDKKYYRHSGYPGGIYETNFTKLQQRFPERVLEKAVKGMLPKGPLGYAMLKKLKCYAGAEHPHAAQQPKVLEI</sequence>
<organism>
    <name type="scientific">Azoarcus sp. (strain BH72)</name>
    <dbReference type="NCBI Taxonomy" id="418699"/>
    <lineage>
        <taxon>Bacteria</taxon>
        <taxon>Pseudomonadati</taxon>
        <taxon>Pseudomonadota</taxon>
        <taxon>Betaproteobacteria</taxon>
        <taxon>Rhodocyclales</taxon>
        <taxon>Zoogloeaceae</taxon>
        <taxon>Azoarcus</taxon>
    </lineage>
</organism>
<dbReference type="EMBL" id="AM406670">
    <property type="protein sequence ID" value="CAL95376.1"/>
    <property type="molecule type" value="Genomic_DNA"/>
</dbReference>
<dbReference type="RefSeq" id="WP_011766486.1">
    <property type="nucleotide sequence ID" value="NC_008702.1"/>
</dbReference>
<dbReference type="SMR" id="A1K971"/>
<dbReference type="STRING" id="62928.azo2760"/>
<dbReference type="KEGG" id="aoa:dqs_2895"/>
<dbReference type="KEGG" id="azo:azo2760"/>
<dbReference type="eggNOG" id="COG0102">
    <property type="taxonomic scope" value="Bacteria"/>
</dbReference>
<dbReference type="HOGENOM" id="CLU_082184_2_2_4"/>
<dbReference type="OrthoDB" id="9801330at2"/>
<dbReference type="Proteomes" id="UP000002588">
    <property type="component" value="Chromosome"/>
</dbReference>
<dbReference type="GO" id="GO:0022625">
    <property type="term" value="C:cytosolic large ribosomal subunit"/>
    <property type="evidence" value="ECO:0007669"/>
    <property type="project" value="TreeGrafter"/>
</dbReference>
<dbReference type="GO" id="GO:0003729">
    <property type="term" value="F:mRNA binding"/>
    <property type="evidence" value="ECO:0007669"/>
    <property type="project" value="TreeGrafter"/>
</dbReference>
<dbReference type="GO" id="GO:0003735">
    <property type="term" value="F:structural constituent of ribosome"/>
    <property type="evidence" value="ECO:0007669"/>
    <property type="project" value="InterPro"/>
</dbReference>
<dbReference type="GO" id="GO:0017148">
    <property type="term" value="P:negative regulation of translation"/>
    <property type="evidence" value="ECO:0007669"/>
    <property type="project" value="TreeGrafter"/>
</dbReference>
<dbReference type="GO" id="GO:0006412">
    <property type="term" value="P:translation"/>
    <property type="evidence" value="ECO:0007669"/>
    <property type="project" value="UniProtKB-UniRule"/>
</dbReference>
<dbReference type="CDD" id="cd00392">
    <property type="entry name" value="Ribosomal_L13"/>
    <property type="match status" value="1"/>
</dbReference>
<dbReference type="FunFam" id="3.90.1180.10:FF:000001">
    <property type="entry name" value="50S ribosomal protein L13"/>
    <property type="match status" value="1"/>
</dbReference>
<dbReference type="Gene3D" id="3.90.1180.10">
    <property type="entry name" value="Ribosomal protein L13"/>
    <property type="match status" value="1"/>
</dbReference>
<dbReference type="HAMAP" id="MF_01366">
    <property type="entry name" value="Ribosomal_uL13"/>
    <property type="match status" value="1"/>
</dbReference>
<dbReference type="InterPro" id="IPR005822">
    <property type="entry name" value="Ribosomal_uL13"/>
</dbReference>
<dbReference type="InterPro" id="IPR005823">
    <property type="entry name" value="Ribosomal_uL13_bac-type"/>
</dbReference>
<dbReference type="InterPro" id="IPR036899">
    <property type="entry name" value="Ribosomal_uL13_sf"/>
</dbReference>
<dbReference type="NCBIfam" id="TIGR01066">
    <property type="entry name" value="rplM_bact"/>
    <property type="match status" value="1"/>
</dbReference>
<dbReference type="PANTHER" id="PTHR11545:SF2">
    <property type="entry name" value="LARGE RIBOSOMAL SUBUNIT PROTEIN UL13M"/>
    <property type="match status" value="1"/>
</dbReference>
<dbReference type="PANTHER" id="PTHR11545">
    <property type="entry name" value="RIBOSOMAL PROTEIN L13"/>
    <property type="match status" value="1"/>
</dbReference>
<dbReference type="Pfam" id="PF00572">
    <property type="entry name" value="Ribosomal_L13"/>
    <property type="match status" value="1"/>
</dbReference>
<dbReference type="PIRSF" id="PIRSF002181">
    <property type="entry name" value="Ribosomal_L13"/>
    <property type="match status" value="1"/>
</dbReference>
<dbReference type="SUPFAM" id="SSF52161">
    <property type="entry name" value="Ribosomal protein L13"/>
    <property type="match status" value="1"/>
</dbReference>
<comment type="function">
    <text evidence="1">This protein is one of the early assembly proteins of the 50S ribosomal subunit, although it is not seen to bind rRNA by itself. It is important during the early stages of 50S assembly.</text>
</comment>
<comment type="subunit">
    <text evidence="1">Part of the 50S ribosomal subunit.</text>
</comment>
<comment type="similarity">
    <text evidence="1">Belongs to the universal ribosomal protein uL13 family.</text>
</comment>
<reference key="1">
    <citation type="journal article" date="2006" name="Nat. Biotechnol.">
        <title>Complete genome of the mutualistic, N2-fixing grass endophyte Azoarcus sp. strain BH72.</title>
        <authorList>
            <person name="Krause A."/>
            <person name="Ramakumar A."/>
            <person name="Bartels D."/>
            <person name="Battistoni F."/>
            <person name="Bekel T."/>
            <person name="Boch J."/>
            <person name="Boehm M."/>
            <person name="Friedrich F."/>
            <person name="Hurek T."/>
            <person name="Krause L."/>
            <person name="Linke B."/>
            <person name="McHardy A.C."/>
            <person name="Sarkar A."/>
            <person name="Schneiker S."/>
            <person name="Syed A.A."/>
            <person name="Thauer R."/>
            <person name="Vorhoelter F.-J."/>
            <person name="Weidner S."/>
            <person name="Puehler A."/>
            <person name="Reinhold-Hurek B."/>
            <person name="Kaiser O."/>
            <person name="Goesmann A."/>
        </authorList>
    </citation>
    <scope>NUCLEOTIDE SEQUENCE [LARGE SCALE GENOMIC DNA]</scope>
    <source>
        <strain>BH72</strain>
    </source>
</reference>
<keyword id="KW-1185">Reference proteome</keyword>
<keyword id="KW-0687">Ribonucleoprotein</keyword>
<keyword id="KW-0689">Ribosomal protein</keyword>
<protein>
    <recommendedName>
        <fullName evidence="1">Large ribosomal subunit protein uL13</fullName>
    </recommendedName>
    <alternativeName>
        <fullName evidence="2">50S ribosomal protein L13</fullName>
    </alternativeName>
</protein>
<name>RL13_AZOSB</name>
<feature type="chain" id="PRO_1000055341" description="Large ribosomal subunit protein uL13">
    <location>
        <begin position="1"/>
        <end position="142"/>
    </location>
</feature>
<proteinExistence type="inferred from homology"/>
<accession>A1K971</accession>
<gene>
    <name evidence="1" type="primary">rplM</name>
    <name type="ordered locus">azo2760</name>
</gene>
<evidence type="ECO:0000255" key="1">
    <source>
        <dbReference type="HAMAP-Rule" id="MF_01366"/>
    </source>
</evidence>
<evidence type="ECO:0000305" key="2"/>